<comment type="subunit">
    <text evidence="1">Part of the 50S ribosomal subunit.</text>
</comment>
<comment type="similarity">
    <text evidence="1">Belongs to the universal ribosomal protein uL30 family.</text>
</comment>
<accession>B2JI47</accession>
<gene>
    <name evidence="1" type="primary">rpmD</name>
    <name type="ordered locus">Bphy_2821</name>
</gene>
<keyword id="KW-1185">Reference proteome</keyword>
<keyword id="KW-0687">Ribonucleoprotein</keyword>
<keyword id="KW-0689">Ribosomal protein</keyword>
<name>RL30_PARP8</name>
<proteinExistence type="inferred from homology"/>
<dbReference type="EMBL" id="CP001043">
    <property type="protein sequence ID" value="ACC71993.1"/>
    <property type="molecule type" value="Genomic_DNA"/>
</dbReference>
<dbReference type="RefSeq" id="WP_004202755.1">
    <property type="nucleotide sequence ID" value="NZ_CADFGH010000028.1"/>
</dbReference>
<dbReference type="SMR" id="B2JI47"/>
<dbReference type="STRING" id="391038.Bphy_2821"/>
<dbReference type="GeneID" id="93061814"/>
<dbReference type="KEGG" id="bph:Bphy_2821"/>
<dbReference type="eggNOG" id="COG1841">
    <property type="taxonomic scope" value="Bacteria"/>
</dbReference>
<dbReference type="HOGENOM" id="CLU_131047_1_4_4"/>
<dbReference type="OrthoDB" id="9812790at2"/>
<dbReference type="Proteomes" id="UP000001192">
    <property type="component" value="Chromosome 1"/>
</dbReference>
<dbReference type="GO" id="GO:0022625">
    <property type="term" value="C:cytosolic large ribosomal subunit"/>
    <property type="evidence" value="ECO:0007669"/>
    <property type="project" value="TreeGrafter"/>
</dbReference>
<dbReference type="GO" id="GO:0003735">
    <property type="term" value="F:structural constituent of ribosome"/>
    <property type="evidence" value="ECO:0007669"/>
    <property type="project" value="InterPro"/>
</dbReference>
<dbReference type="GO" id="GO:0006412">
    <property type="term" value="P:translation"/>
    <property type="evidence" value="ECO:0007669"/>
    <property type="project" value="UniProtKB-UniRule"/>
</dbReference>
<dbReference type="CDD" id="cd01658">
    <property type="entry name" value="Ribosomal_L30"/>
    <property type="match status" value="1"/>
</dbReference>
<dbReference type="FunFam" id="3.30.1390.20:FF:000001">
    <property type="entry name" value="50S ribosomal protein L30"/>
    <property type="match status" value="1"/>
</dbReference>
<dbReference type="Gene3D" id="3.30.1390.20">
    <property type="entry name" value="Ribosomal protein L30, ferredoxin-like fold domain"/>
    <property type="match status" value="1"/>
</dbReference>
<dbReference type="HAMAP" id="MF_01371_B">
    <property type="entry name" value="Ribosomal_uL30_B"/>
    <property type="match status" value="1"/>
</dbReference>
<dbReference type="InterPro" id="IPR036919">
    <property type="entry name" value="Ribo_uL30_ferredoxin-like_sf"/>
</dbReference>
<dbReference type="InterPro" id="IPR005996">
    <property type="entry name" value="Ribosomal_uL30_bac-type"/>
</dbReference>
<dbReference type="InterPro" id="IPR016082">
    <property type="entry name" value="Ribosomal_uL30_ferredoxin-like"/>
</dbReference>
<dbReference type="NCBIfam" id="TIGR01308">
    <property type="entry name" value="rpmD_bact"/>
    <property type="match status" value="1"/>
</dbReference>
<dbReference type="PANTHER" id="PTHR15892:SF2">
    <property type="entry name" value="LARGE RIBOSOMAL SUBUNIT PROTEIN UL30M"/>
    <property type="match status" value="1"/>
</dbReference>
<dbReference type="PANTHER" id="PTHR15892">
    <property type="entry name" value="MITOCHONDRIAL RIBOSOMAL PROTEIN L30"/>
    <property type="match status" value="1"/>
</dbReference>
<dbReference type="Pfam" id="PF00327">
    <property type="entry name" value="Ribosomal_L30"/>
    <property type="match status" value="1"/>
</dbReference>
<dbReference type="PIRSF" id="PIRSF002211">
    <property type="entry name" value="Ribosomal_L30_bac-type"/>
    <property type="match status" value="1"/>
</dbReference>
<dbReference type="SUPFAM" id="SSF55129">
    <property type="entry name" value="Ribosomal protein L30p/L7e"/>
    <property type="match status" value="1"/>
</dbReference>
<protein>
    <recommendedName>
        <fullName evidence="1">Large ribosomal subunit protein uL30</fullName>
    </recommendedName>
    <alternativeName>
        <fullName evidence="2">50S ribosomal protein L30</fullName>
    </alternativeName>
</protein>
<reference key="1">
    <citation type="journal article" date="2014" name="Stand. Genomic Sci.">
        <title>Complete genome sequence of Burkholderia phymatum STM815(T), a broad host range and efficient nitrogen-fixing symbiont of Mimosa species.</title>
        <authorList>
            <person name="Moulin L."/>
            <person name="Klonowska A."/>
            <person name="Caroline B."/>
            <person name="Booth K."/>
            <person name="Vriezen J.A."/>
            <person name="Melkonian R."/>
            <person name="James E.K."/>
            <person name="Young J.P."/>
            <person name="Bena G."/>
            <person name="Hauser L."/>
            <person name="Land M."/>
            <person name="Kyrpides N."/>
            <person name="Bruce D."/>
            <person name="Chain P."/>
            <person name="Copeland A."/>
            <person name="Pitluck S."/>
            <person name="Woyke T."/>
            <person name="Lizotte-Waniewski M."/>
            <person name="Bristow J."/>
            <person name="Riley M."/>
        </authorList>
    </citation>
    <scope>NUCLEOTIDE SEQUENCE [LARGE SCALE GENOMIC DNA]</scope>
    <source>
        <strain>DSM 17167 / CIP 108236 / LMG 21445 / STM815</strain>
    </source>
</reference>
<sequence>MSEKTVKVQLVKSLIGTRESHRATVRGLGLRRLNSVSELQDTPAVRGMINKVSYLVKVIG</sequence>
<organism>
    <name type="scientific">Paraburkholderia phymatum (strain DSM 17167 / CIP 108236 / LMG 21445 / STM815)</name>
    <name type="common">Burkholderia phymatum</name>
    <dbReference type="NCBI Taxonomy" id="391038"/>
    <lineage>
        <taxon>Bacteria</taxon>
        <taxon>Pseudomonadati</taxon>
        <taxon>Pseudomonadota</taxon>
        <taxon>Betaproteobacteria</taxon>
        <taxon>Burkholderiales</taxon>
        <taxon>Burkholderiaceae</taxon>
        <taxon>Paraburkholderia</taxon>
    </lineage>
</organism>
<feature type="chain" id="PRO_1000144658" description="Large ribosomal subunit protein uL30">
    <location>
        <begin position="1"/>
        <end position="60"/>
    </location>
</feature>
<evidence type="ECO:0000255" key="1">
    <source>
        <dbReference type="HAMAP-Rule" id="MF_01371"/>
    </source>
</evidence>
<evidence type="ECO:0000305" key="2"/>